<proteinExistence type="inferred from homology"/>
<organism>
    <name type="scientific">Thermoplasma volcanium (strain ATCC 51530 / DSM 4299 / JCM 9571 / NBRC 15438 / GSS1)</name>
    <dbReference type="NCBI Taxonomy" id="273116"/>
    <lineage>
        <taxon>Archaea</taxon>
        <taxon>Methanobacteriati</taxon>
        <taxon>Thermoplasmatota</taxon>
        <taxon>Thermoplasmata</taxon>
        <taxon>Thermoplasmatales</taxon>
        <taxon>Thermoplasmataceae</taxon>
        <taxon>Thermoplasma</taxon>
    </lineage>
</organism>
<keyword id="KW-0067">ATP-binding</keyword>
<keyword id="KW-0143">Chaperone</keyword>
<keyword id="KW-0547">Nucleotide-binding</keyword>
<keyword id="KW-0346">Stress response</keyword>
<reference key="1">
    <citation type="journal article" date="2000" name="Proc. Natl. Acad. Sci. U.S.A.">
        <title>Archaeal adaptation to higher temperatures revealed by genomic sequence of Thermoplasma volcanium.</title>
        <authorList>
            <person name="Kawashima T."/>
            <person name="Amano N."/>
            <person name="Koike H."/>
            <person name="Makino S."/>
            <person name="Higuchi S."/>
            <person name="Kawashima-Ohya Y."/>
            <person name="Watanabe K."/>
            <person name="Yamazaki M."/>
            <person name="Kanehori K."/>
            <person name="Kawamoto T."/>
            <person name="Nunoshiba T."/>
            <person name="Yamamoto Y."/>
            <person name="Aramaki H."/>
            <person name="Makino K."/>
            <person name="Suzuki M."/>
        </authorList>
    </citation>
    <scope>NUCLEOTIDE SEQUENCE [LARGE SCALE GENOMIC DNA]</scope>
    <source>
        <strain>ATCC 51530 / DSM 4299 / JCM 9571 / NBRC 15438 / GSS1</strain>
    </source>
</reference>
<sequence length="613" mass="66473">MSKIIGIDLGTSNSAAAVVISGKPTVIPSSEGVSIGGKAFPSYVAFTKDGQMLVGEPARRQALLNPEGTIFAAKRKMGTDYKFKVFDKEFTPQQISAFILQKIKKDAEAFLGEPVNEAVITVPAYFNDNQRQATKDAGTIAGFDVKRIINEPTAAALAYGVDKSGKSEKILVFDLGGGTLDVTIIEISKRPNVQVLSTSGDTQLGGTDMDEAIVNYIADDFQKKEGIDLRKDRGAYIRLRDAAEKAKIELSTTLSSDIDLPYITVTSSGPKHIKMTLTRAKLEELISPIVERVKAPIDKALEGAKLKKTDITKLLFVGGPTRIPYVRKYVEDYLGIKAEGGVDPMEAVAIGAAIQGAVLKGEIKDIVLLDVTPLTLSVETLGGIATPIIPANTTIPVRKSQVFTTAEDMQTTVTIHVVQGERPLAKDNVSLGMFNLTGIAPAPRGIPQIEVTFDIDSNGILNVTAVDKATGKKQGITITASTKLSKDEIERMKKEAEQYAEQDRKMKEQIETLNNAESLAYSVEKTLNEAGDKVDKETKDRILSEVKDLRKAIEEKNMDNVKTLMEKISKDIQEVGTKMYQSASSTTQTGSGNQNSSKQENDKTVDAEYKEKS</sequence>
<dbReference type="EMBL" id="BA000011">
    <property type="protein sequence ID" value="BAB59629.1"/>
    <property type="molecule type" value="Genomic_DNA"/>
</dbReference>
<dbReference type="RefSeq" id="WP_048054084.1">
    <property type="nucleotide sequence ID" value="NC_002689.2"/>
</dbReference>
<dbReference type="SMR" id="Q97BG8"/>
<dbReference type="STRING" id="273116.gene:9381269"/>
<dbReference type="PaxDb" id="273116-14324702"/>
<dbReference type="GeneID" id="1441004"/>
<dbReference type="KEGG" id="tvo:TVG0471466"/>
<dbReference type="eggNOG" id="arCOG03060">
    <property type="taxonomic scope" value="Archaea"/>
</dbReference>
<dbReference type="HOGENOM" id="CLU_005965_2_4_2"/>
<dbReference type="OrthoDB" id="9944at2157"/>
<dbReference type="PhylomeDB" id="Q97BG8"/>
<dbReference type="Proteomes" id="UP000001017">
    <property type="component" value="Chromosome"/>
</dbReference>
<dbReference type="GO" id="GO:0005524">
    <property type="term" value="F:ATP binding"/>
    <property type="evidence" value="ECO:0007669"/>
    <property type="project" value="UniProtKB-UniRule"/>
</dbReference>
<dbReference type="GO" id="GO:0140662">
    <property type="term" value="F:ATP-dependent protein folding chaperone"/>
    <property type="evidence" value="ECO:0007669"/>
    <property type="project" value="InterPro"/>
</dbReference>
<dbReference type="GO" id="GO:0051082">
    <property type="term" value="F:unfolded protein binding"/>
    <property type="evidence" value="ECO:0007669"/>
    <property type="project" value="InterPro"/>
</dbReference>
<dbReference type="CDD" id="cd10234">
    <property type="entry name" value="ASKHA_NBD_HSP70_DnaK-like"/>
    <property type="match status" value="1"/>
</dbReference>
<dbReference type="FunFam" id="2.60.34.10:FF:000014">
    <property type="entry name" value="Chaperone protein DnaK HSP70"/>
    <property type="match status" value="1"/>
</dbReference>
<dbReference type="FunFam" id="1.20.1270.10:FF:000001">
    <property type="entry name" value="Molecular chaperone DnaK"/>
    <property type="match status" value="1"/>
</dbReference>
<dbReference type="FunFam" id="3.30.420.40:FF:000071">
    <property type="entry name" value="Molecular chaperone DnaK"/>
    <property type="match status" value="1"/>
</dbReference>
<dbReference type="FunFam" id="3.90.640.10:FF:000003">
    <property type="entry name" value="Molecular chaperone DnaK"/>
    <property type="match status" value="1"/>
</dbReference>
<dbReference type="Gene3D" id="1.20.1270.10">
    <property type="match status" value="1"/>
</dbReference>
<dbReference type="Gene3D" id="3.30.420.40">
    <property type="match status" value="2"/>
</dbReference>
<dbReference type="Gene3D" id="3.90.640.10">
    <property type="entry name" value="Actin, Chain A, domain 4"/>
    <property type="match status" value="1"/>
</dbReference>
<dbReference type="Gene3D" id="2.60.34.10">
    <property type="entry name" value="Substrate Binding Domain Of DNAk, Chain A, domain 1"/>
    <property type="match status" value="1"/>
</dbReference>
<dbReference type="HAMAP" id="MF_00332">
    <property type="entry name" value="DnaK"/>
    <property type="match status" value="1"/>
</dbReference>
<dbReference type="InterPro" id="IPR043129">
    <property type="entry name" value="ATPase_NBD"/>
</dbReference>
<dbReference type="InterPro" id="IPR012725">
    <property type="entry name" value="Chaperone_DnaK"/>
</dbReference>
<dbReference type="InterPro" id="IPR018181">
    <property type="entry name" value="Heat_shock_70_CS"/>
</dbReference>
<dbReference type="InterPro" id="IPR029048">
    <property type="entry name" value="HSP70_C_sf"/>
</dbReference>
<dbReference type="InterPro" id="IPR029047">
    <property type="entry name" value="HSP70_peptide-bd_sf"/>
</dbReference>
<dbReference type="InterPro" id="IPR013126">
    <property type="entry name" value="Hsp_70_fam"/>
</dbReference>
<dbReference type="NCBIfam" id="NF001413">
    <property type="entry name" value="PRK00290.1"/>
    <property type="match status" value="1"/>
</dbReference>
<dbReference type="NCBIfam" id="TIGR02350">
    <property type="entry name" value="prok_dnaK"/>
    <property type="match status" value="1"/>
</dbReference>
<dbReference type="PANTHER" id="PTHR19375">
    <property type="entry name" value="HEAT SHOCK PROTEIN 70KDA"/>
    <property type="match status" value="1"/>
</dbReference>
<dbReference type="Pfam" id="PF00012">
    <property type="entry name" value="HSP70"/>
    <property type="match status" value="2"/>
</dbReference>
<dbReference type="PRINTS" id="PR00301">
    <property type="entry name" value="HEATSHOCK70"/>
</dbReference>
<dbReference type="SUPFAM" id="SSF53067">
    <property type="entry name" value="Actin-like ATPase domain"/>
    <property type="match status" value="2"/>
</dbReference>
<dbReference type="SUPFAM" id="SSF100934">
    <property type="entry name" value="Heat shock protein 70kD (HSP70), C-terminal subdomain"/>
    <property type="match status" value="1"/>
</dbReference>
<dbReference type="SUPFAM" id="SSF100920">
    <property type="entry name" value="Heat shock protein 70kD (HSP70), peptide-binding domain"/>
    <property type="match status" value="1"/>
</dbReference>
<dbReference type="PROSITE" id="PS00297">
    <property type="entry name" value="HSP70_1"/>
    <property type="match status" value="1"/>
</dbReference>
<dbReference type="PROSITE" id="PS00329">
    <property type="entry name" value="HSP70_2"/>
    <property type="match status" value="1"/>
</dbReference>
<dbReference type="PROSITE" id="PS01036">
    <property type="entry name" value="HSP70_3"/>
    <property type="match status" value="1"/>
</dbReference>
<comment type="function">
    <text evidence="1">Acts as a chaperone.</text>
</comment>
<comment type="similarity">
    <text evidence="1">Belongs to the heat shock protein 70 family.</text>
</comment>
<accession>Q97BG8</accession>
<protein>
    <recommendedName>
        <fullName evidence="1">Chaperone protein DnaK</fullName>
    </recommendedName>
    <alternativeName>
        <fullName evidence="1">HSP70</fullName>
    </alternativeName>
    <alternativeName>
        <fullName evidence="1">Heat shock 70 kDa protein</fullName>
    </alternativeName>
    <alternativeName>
        <fullName evidence="1">Heat shock protein 70</fullName>
    </alternativeName>
</protein>
<evidence type="ECO:0000255" key="1">
    <source>
        <dbReference type="HAMAP-Rule" id="MF_00332"/>
    </source>
</evidence>
<evidence type="ECO:0000256" key="2">
    <source>
        <dbReference type="SAM" id="MobiDB-lite"/>
    </source>
</evidence>
<gene>
    <name evidence="1" type="primary">dnaK</name>
    <name type="ordered locus">TV0487</name>
    <name type="ORF">TVG0471466</name>
</gene>
<name>DNAK_THEVO</name>
<feature type="chain" id="PRO_0000078603" description="Chaperone protein DnaK">
    <location>
        <begin position="1"/>
        <end position="613"/>
    </location>
</feature>
<feature type="region of interest" description="Disordered" evidence="2">
    <location>
        <begin position="579"/>
        <end position="613"/>
    </location>
</feature>
<feature type="compositionally biased region" description="Low complexity" evidence="2">
    <location>
        <begin position="581"/>
        <end position="597"/>
    </location>
</feature>
<feature type="compositionally biased region" description="Basic and acidic residues" evidence="2">
    <location>
        <begin position="599"/>
        <end position="613"/>
    </location>
</feature>